<accession>Q06893</accession>
<accession>Q47821</accession>
<accession>Q57112</accession>
<organism>
    <name type="scientific">Enterococcus faecalis (strain ATCC 700802 / V583)</name>
    <dbReference type="NCBI Taxonomy" id="226185"/>
    <lineage>
        <taxon>Bacteria</taxon>
        <taxon>Bacillati</taxon>
        <taxon>Bacillota</taxon>
        <taxon>Bacilli</taxon>
        <taxon>Lactobacillales</taxon>
        <taxon>Enterococcaceae</taxon>
        <taxon>Enterococcus</taxon>
    </lineage>
</organism>
<keyword id="KW-0046">Antibiotic resistance</keyword>
<keyword id="KW-0067">ATP-binding</keyword>
<keyword id="KW-1003">Cell membrane</keyword>
<keyword id="KW-0133">Cell shape</keyword>
<keyword id="KW-0961">Cell wall biogenesis/degradation</keyword>
<keyword id="KW-0903">Direct protein sequencing</keyword>
<keyword id="KW-0436">Ligase</keyword>
<keyword id="KW-0460">Magnesium</keyword>
<keyword id="KW-0464">Manganese</keyword>
<keyword id="KW-0472">Membrane</keyword>
<keyword id="KW-0479">Metal-binding</keyword>
<keyword id="KW-0547">Nucleotide-binding</keyword>
<keyword id="KW-0573">Peptidoglycan synthesis</keyword>
<keyword id="KW-1185">Reference proteome</keyword>
<gene>
    <name type="primary">vanB</name>
    <name type="synonym">vanB2</name>
    <name type="ordered locus">EF_2294</name>
</gene>
<dbReference type="EC" id="6.1.2.1"/>
<dbReference type="EMBL" id="U00456">
    <property type="protein sequence ID" value="AAC43217.1"/>
    <property type="molecule type" value="Unassigned_DNA"/>
</dbReference>
<dbReference type="EMBL" id="U35369">
    <property type="protein sequence ID" value="AAB05627.1"/>
    <property type="molecule type" value="Genomic_DNA"/>
</dbReference>
<dbReference type="EMBL" id="AE016830">
    <property type="protein sequence ID" value="AAO82021.1"/>
    <property type="molecule type" value="Genomic_DNA"/>
</dbReference>
<dbReference type="EMBL" id="L06138">
    <property type="status" value="NOT_ANNOTATED_CDS"/>
    <property type="molecule type" value="Genomic_DNA"/>
</dbReference>
<dbReference type="EMBL" id="L15304">
    <property type="protein sequence ID" value="AAA24785.1"/>
    <property type="molecule type" value="Genomic_DNA"/>
</dbReference>
<dbReference type="PIR" id="PN0478">
    <property type="entry name" value="PN0478"/>
</dbReference>
<dbReference type="RefSeq" id="NP_815951.1">
    <property type="nucleotide sequence ID" value="NC_004668.1"/>
</dbReference>
<dbReference type="RefSeq" id="WP_002368691.1">
    <property type="nucleotide sequence ID" value="NZ_KE136528.1"/>
</dbReference>
<dbReference type="SMR" id="Q06893"/>
<dbReference type="STRING" id="226185.EF_2294"/>
<dbReference type="EnsemblBacteria" id="AAO82021">
    <property type="protein sequence ID" value="AAO82021"/>
    <property type="gene ID" value="EF_2294"/>
</dbReference>
<dbReference type="KEGG" id="efa:EF2294"/>
<dbReference type="PATRIC" id="fig|226185.45.peg.1238"/>
<dbReference type="eggNOG" id="COG1181">
    <property type="taxonomic scope" value="Bacteria"/>
</dbReference>
<dbReference type="HOGENOM" id="CLU_039268_0_0_9"/>
<dbReference type="BioCyc" id="MetaCyc:MONOMER-15464"/>
<dbReference type="SABIO-RK" id="Q06893"/>
<dbReference type="Proteomes" id="UP000001415">
    <property type="component" value="Chromosome"/>
</dbReference>
<dbReference type="GO" id="GO:0005829">
    <property type="term" value="C:cytosol"/>
    <property type="evidence" value="ECO:0007669"/>
    <property type="project" value="TreeGrafter"/>
</dbReference>
<dbReference type="GO" id="GO:0005886">
    <property type="term" value="C:plasma membrane"/>
    <property type="evidence" value="ECO:0007669"/>
    <property type="project" value="UniProtKB-SubCell"/>
</dbReference>
<dbReference type="GO" id="GO:0005524">
    <property type="term" value="F:ATP binding"/>
    <property type="evidence" value="ECO:0007669"/>
    <property type="project" value="UniProtKB-KW"/>
</dbReference>
<dbReference type="GO" id="GO:0160220">
    <property type="term" value="F:D-alanine-(R)-lactate ligase activity"/>
    <property type="evidence" value="ECO:0007669"/>
    <property type="project" value="UniProtKB-EC"/>
</dbReference>
<dbReference type="GO" id="GO:0008716">
    <property type="term" value="F:D-alanine-D-alanine ligase activity"/>
    <property type="evidence" value="ECO:0007669"/>
    <property type="project" value="UniProtKB-UniRule"/>
</dbReference>
<dbReference type="GO" id="GO:0046872">
    <property type="term" value="F:metal ion binding"/>
    <property type="evidence" value="ECO:0007669"/>
    <property type="project" value="UniProtKB-KW"/>
</dbReference>
<dbReference type="GO" id="GO:0071555">
    <property type="term" value="P:cell wall organization"/>
    <property type="evidence" value="ECO:0007669"/>
    <property type="project" value="UniProtKB-KW"/>
</dbReference>
<dbReference type="GO" id="GO:0009252">
    <property type="term" value="P:peptidoglycan biosynthetic process"/>
    <property type="evidence" value="ECO:0007669"/>
    <property type="project" value="UniProtKB-UniRule"/>
</dbReference>
<dbReference type="GO" id="GO:0008360">
    <property type="term" value="P:regulation of cell shape"/>
    <property type="evidence" value="ECO:0007669"/>
    <property type="project" value="UniProtKB-KW"/>
</dbReference>
<dbReference type="GO" id="GO:0046677">
    <property type="term" value="P:response to antibiotic"/>
    <property type="evidence" value="ECO:0007669"/>
    <property type="project" value="UniProtKB-KW"/>
</dbReference>
<dbReference type="FunFam" id="3.30.470.20:FF:000008">
    <property type="entry name" value="D-alanine--D-alanine ligase"/>
    <property type="match status" value="1"/>
</dbReference>
<dbReference type="Gene3D" id="3.40.50.20">
    <property type="match status" value="1"/>
</dbReference>
<dbReference type="Gene3D" id="3.30.1490.20">
    <property type="entry name" value="ATP-grasp fold, A domain"/>
    <property type="match status" value="1"/>
</dbReference>
<dbReference type="Gene3D" id="3.30.470.20">
    <property type="entry name" value="ATP-grasp fold, B domain"/>
    <property type="match status" value="1"/>
</dbReference>
<dbReference type="HAMAP" id="MF_00047">
    <property type="entry name" value="Dala_Dala_lig"/>
    <property type="match status" value="1"/>
</dbReference>
<dbReference type="InterPro" id="IPR011761">
    <property type="entry name" value="ATP-grasp"/>
</dbReference>
<dbReference type="InterPro" id="IPR013815">
    <property type="entry name" value="ATP_grasp_subdomain_1"/>
</dbReference>
<dbReference type="InterPro" id="IPR000291">
    <property type="entry name" value="D-Ala_lig_Van_CS"/>
</dbReference>
<dbReference type="InterPro" id="IPR005905">
    <property type="entry name" value="D_ala_D_ala"/>
</dbReference>
<dbReference type="InterPro" id="IPR011095">
    <property type="entry name" value="Dala_Dala_lig_C"/>
</dbReference>
<dbReference type="InterPro" id="IPR011127">
    <property type="entry name" value="Dala_Dala_lig_N"/>
</dbReference>
<dbReference type="InterPro" id="IPR016185">
    <property type="entry name" value="PreATP-grasp_dom_sf"/>
</dbReference>
<dbReference type="NCBIfam" id="TIGR01205">
    <property type="entry name" value="D_ala_D_alaTIGR"/>
    <property type="match status" value="1"/>
</dbReference>
<dbReference type="NCBIfam" id="NF000206">
    <property type="entry name" value="D_ala_D_lac"/>
    <property type="match status" value="1"/>
</dbReference>
<dbReference type="NCBIfam" id="NF012216">
    <property type="entry name" value="D_ala_D_lac_VanB"/>
    <property type="match status" value="1"/>
</dbReference>
<dbReference type="NCBIfam" id="NF002528">
    <property type="entry name" value="PRK01966.1-4"/>
    <property type="match status" value="1"/>
</dbReference>
<dbReference type="PANTHER" id="PTHR23132">
    <property type="entry name" value="D-ALANINE--D-ALANINE LIGASE"/>
    <property type="match status" value="1"/>
</dbReference>
<dbReference type="PANTHER" id="PTHR23132:SF25">
    <property type="entry name" value="D-ALANINE--D-ALANINE LIGASE A"/>
    <property type="match status" value="1"/>
</dbReference>
<dbReference type="Pfam" id="PF07478">
    <property type="entry name" value="Dala_Dala_lig_C"/>
    <property type="match status" value="1"/>
</dbReference>
<dbReference type="Pfam" id="PF01820">
    <property type="entry name" value="Dala_Dala_lig_N"/>
    <property type="match status" value="1"/>
</dbReference>
<dbReference type="PIRSF" id="PIRSF039102">
    <property type="entry name" value="Ddl/VanB"/>
    <property type="match status" value="1"/>
</dbReference>
<dbReference type="SUPFAM" id="SSF56059">
    <property type="entry name" value="Glutathione synthetase ATP-binding domain-like"/>
    <property type="match status" value="1"/>
</dbReference>
<dbReference type="SUPFAM" id="SSF52440">
    <property type="entry name" value="PreATP-grasp domain"/>
    <property type="match status" value="1"/>
</dbReference>
<dbReference type="PROSITE" id="PS50975">
    <property type="entry name" value="ATP_GRASP"/>
    <property type="match status" value="1"/>
</dbReference>
<dbReference type="PROSITE" id="PS00843">
    <property type="entry name" value="DALA_DALA_LIGASE_1"/>
    <property type="match status" value="1"/>
</dbReference>
<dbReference type="PROSITE" id="PS00844">
    <property type="entry name" value="DALA_DALA_LIGASE_2"/>
    <property type="match status" value="1"/>
</dbReference>
<name>VANB_ENTFA</name>
<proteinExistence type="evidence at protein level"/>
<sequence>MNKIKVAIIFGGCSEEHDVSVKSAIEIAANINTEKFDPHYIGITKNGVWKLCKKPCTEWEADSLPAIFSPDRKTHGLLVMKEREYETRRIDVAFPVLHGKCGEDGAIQGLFELSGIPYVGCDIQSSAACMDKSLAYILTKNAGIAVPEFQMIEKGDKPEARTLTYPVFVKPARSGSSFGVTKVNSTEELNAAIEAAGQYDGKILIEQAISGCEVGCAVMGNEDDLIVGEVDQIRLSHGIFRIHQENEPEKGSENAMIIVPADIPVEERNRVQETAKKVYRVLGCRGLARVDLFLQEDGGIVLNEVNTLPGFTSYSRYPRMAAAAGITLPALIDSLITLAIER</sequence>
<comment type="function">
    <text>Required for high-level resistance to glycopeptides antibiotics. D-Ala--D-Ala ligase of altered specificity which catalyzes ester bond formation between D-Ala and various D-hydroxy acids; producing a peptidoglycan which does not terminate in D-alanine but in D-lactate, thus preventing vancomycin binding.</text>
</comment>
<comment type="catalytic activity">
    <reaction evidence="2">
        <text>(R)-lactate + D-alanine + ATP = D-alanyl-(R)-lactate + ADP + phosphate</text>
        <dbReference type="Rhea" id="RHEA:37347"/>
        <dbReference type="ChEBI" id="CHEBI:16004"/>
        <dbReference type="ChEBI" id="CHEBI:30616"/>
        <dbReference type="ChEBI" id="CHEBI:43474"/>
        <dbReference type="ChEBI" id="CHEBI:57416"/>
        <dbReference type="ChEBI" id="CHEBI:61166"/>
        <dbReference type="ChEBI" id="CHEBI:456216"/>
        <dbReference type="EC" id="6.1.2.1"/>
    </reaction>
</comment>
<comment type="cofactor">
    <cofactor evidence="1">
        <name>Mg(2+)</name>
        <dbReference type="ChEBI" id="CHEBI:18420"/>
    </cofactor>
    <cofactor evidence="1">
        <name>Mn(2+)</name>
        <dbReference type="ChEBI" id="CHEBI:29035"/>
    </cofactor>
    <text evidence="1">Binds 2 magnesium or manganese ions per subunit.</text>
</comment>
<comment type="subcellular location">
    <subcellularLocation>
        <location>Cell membrane</location>
        <topology>Peripheral membrane protein</topology>
        <orientation>Cytoplasmic side</orientation>
    </subcellularLocation>
</comment>
<comment type="induction">
    <text>By vancomycin.</text>
</comment>
<comment type="similarity">
    <text evidence="3">Belongs to the D-alanine--D-alanine ligase family.</text>
</comment>
<evidence type="ECO:0000250" key="1"/>
<evidence type="ECO:0000269" key="2">
    <source>
    </source>
</evidence>
<evidence type="ECO:0000305" key="3"/>
<reference key="1">
    <citation type="journal article" date="1994" name="Gene">
        <title>Sequence of the vanB and ddl genes encoding D-alanine:D-lactate and D-alanine:D-alanine ligases in vancomycin-resistant Enterococcus faecalis V583.</title>
        <authorList>
            <person name="Evers S."/>
            <person name="Reynolds P.E."/>
            <person name="Courvalin P."/>
        </authorList>
    </citation>
    <scope>NUCLEOTIDE SEQUENCE [GENOMIC DNA]</scope>
    <scope>PROTEIN SEQUENCE OF 1-10</scope>
    <source>
        <strain>ATCC 700802 / V583</strain>
    </source>
</reference>
<reference key="2">
    <citation type="journal article" date="1996" name="J. Bacteriol.">
        <title>Regulation of VanB-type vancomycin resistance gene expression by the VanS(B)-VanR(B) two-component regulatory system in Enterococcus faecalis V583.</title>
        <authorList>
            <person name="Evers S."/>
            <person name="Courvalin P."/>
        </authorList>
    </citation>
    <scope>NUCLEOTIDE SEQUENCE [GENOMIC DNA]</scope>
    <source>
        <strain>ATCC 700802 / V583</strain>
    </source>
</reference>
<reference key="3">
    <citation type="journal article" date="2003" name="Science">
        <title>Role of mobile DNA in the evolution of vancomycin-resistant Enterococcus faecalis.</title>
        <authorList>
            <person name="Paulsen I.T."/>
            <person name="Banerjei L."/>
            <person name="Myers G.S.A."/>
            <person name="Nelson K.E."/>
            <person name="Seshadri R."/>
            <person name="Read T.D."/>
            <person name="Fouts D.E."/>
            <person name="Eisen J.A."/>
            <person name="Gill S.R."/>
            <person name="Heidelberg J.F."/>
            <person name="Tettelin H."/>
            <person name="Dodson R.J."/>
            <person name="Umayam L.A."/>
            <person name="Brinkac L.M."/>
            <person name="Beanan M.J."/>
            <person name="Daugherty S.C."/>
            <person name="DeBoy R.T."/>
            <person name="Durkin S.A."/>
            <person name="Kolonay J.F."/>
            <person name="Madupu R."/>
            <person name="Nelson W.C."/>
            <person name="Vamathevan J.J."/>
            <person name="Tran B."/>
            <person name="Upton J."/>
            <person name="Hansen T."/>
            <person name="Shetty J."/>
            <person name="Khouri H.M."/>
            <person name="Utterback T.R."/>
            <person name="Radune D."/>
            <person name="Ketchum K.A."/>
            <person name="Dougherty B.A."/>
            <person name="Fraser C.M."/>
        </authorList>
    </citation>
    <scope>NUCLEOTIDE SEQUENCE [LARGE SCALE GENOMIC DNA]</scope>
    <source>
        <strain>ATCC 700802 / V583</strain>
    </source>
</reference>
<reference key="4">
    <citation type="journal article" date="1994" name="FEBS Lett.">
        <title>Purification and characterization of the VanB ligase associated with type B vancomycin resistance in Enterococcus faecalis V583.</title>
        <authorList>
            <person name="Meziane-Cherif D."/>
            <person name="Badet-Denisot M.A."/>
            <person name="Evers S."/>
            <person name="Courvalin P."/>
            <person name="Badet B."/>
        </authorList>
    </citation>
    <scope>PROTEIN SEQUENCE OF 1-11</scope>
    <scope>CATALYTIC ACTIVITY</scope>
    <scope>SUBSTRATE SPECIFICITY</scope>
    <scope>BIOPHYSICOCHEMICAL PROPERTIES</scope>
    <source>
        <strain>ATCC 700802 / V583</strain>
    </source>
</reference>
<reference key="5">
    <citation type="journal article" date="1993" name="Gene">
        <title>The vanB gene of vancomycin-resistant Enterococcus faecalis V583 is structurally related to genes encoding D-Ala:D-Ala ligases and glycopeptide-resistance proteins VanA and VanC.</title>
        <authorList>
            <person name="Evers S."/>
            <person name="Sahm D.F."/>
            <person name="Courvalin P."/>
        </authorList>
    </citation>
    <scope>NUCLEOTIDE SEQUENCE [GENOMIC DNA] OF 110-305</scope>
    <source>
        <strain>ATCC 700802 / V583</strain>
    </source>
</reference>
<reference key="6">
    <citation type="journal article" date="1993" name="Antimicrob. Agents Chemother.">
        <title>A gene conferring resistance to vancomycin but not teicoplanin in isolates of Enterococcus faecalis and Enterococcus faecium demonstrates homology with vanB, vanA, and vanC genes of enterococci.</title>
        <authorList>
            <person name="Gold H.S."/>
            <person name="Uenal S."/>
            <person name="Cercenado E."/>
            <person name="Thauvin-Eliopoulos C."/>
            <person name="Eliopoulos G.M."/>
            <person name="Wennersten C.B."/>
            <person name="Moellering R.C. Jr."/>
        </authorList>
    </citation>
    <scope>NUCLEOTIDE SEQUENCE [GENOMIC DNA] OF 103-312</scope>
    <source>
        <strain>SF300</strain>
    </source>
</reference>
<protein>
    <recommendedName>
        <fullName>Vancomycin B-type resistance protein VanB</fullName>
        <ecNumber>6.1.2.1</ecNumber>
    </recommendedName>
    <alternativeName>
        <fullName>D-alanine--D-lactate ligase</fullName>
    </alternativeName>
    <alternativeName>
        <fullName>VanB ligase</fullName>
    </alternativeName>
</protein>
<feature type="chain" id="PRO_0000177918" description="Vancomycin B-type resistance protein VanB">
    <location>
        <begin position="1"/>
        <end position="342"/>
    </location>
</feature>
<feature type="domain" description="ATP-grasp">
    <location>
        <begin position="136"/>
        <end position="337"/>
    </location>
</feature>
<feature type="binding site" evidence="1">
    <location>
        <position position="132"/>
    </location>
    <ligand>
        <name>ATP</name>
        <dbReference type="ChEBI" id="CHEBI:30616"/>
    </ligand>
</feature>
<feature type="binding site" evidence="1">
    <location>
        <begin position="168"/>
        <end position="170"/>
    </location>
    <ligand>
        <name>ATP</name>
        <dbReference type="ChEBI" id="CHEBI:30616"/>
    </ligand>
</feature>
<feature type="binding site" evidence="1">
    <location>
        <begin position="176"/>
        <end position="177"/>
    </location>
    <ligand>
        <name>ATP</name>
        <dbReference type="ChEBI" id="CHEBI:30616"/>
    </ligand>
</feature>
<feature type="binding site" evidence="1">
    <location>
        <begin position="206"/>
        <end position="213"/>
    </location>
    <ligand>
        <name>ATP</name>
        <dbReference type="ChEBI" id="CHEBI:30616"/>
    </ligand>
</feature>
<feature type="binding site" evidence="1">
    <location>
        <position position="240"/>
    </location>
    <ligand>
        <name>ATP</name>
        <dbReference type="ChEBI" id="CHEBI:30616"/>
    </ligand>
</feature>
<feature type="binding site" evidence="1">
    <location>
        <position position="243"/>
    </location>
    <ligand>
        <name>substrate</name>
    </ligand>
</feature>
<feature type="binding site" evidence="1">
    <location>
        <begin position="303"/>
        <end position="304"/>
    </location>
    <ligand>
        <name>ATP</name>
        <dbReference type="ChEBI" id="CHEBI:30616"/>
    </ligand>
</feature>
<feature type="binding site" evidence="1">
    <location>
        <position position="304"/>
    </location>
    <ligand>
        <name>Mg(2+)</name>
        <dbReference type="ChEBI" id="CHEBI:18420"/>
        <label>1</label>
    </ligand>
</feature>
<feature type="binding site" evidence="1">
    <location>
        <position position="304"/>
    </location>
    <ligand>
        <name>Mg(2+)</name>
        <dbReference type="ChEBI" id="CHEBI:18420"/>
        <label>2</label>
    </ligand>
</feature>
<feature type="binding site" evidence="1">
    <location>
        <position position="306"/>
    </location>
    <ligand>
        <name>Mg(2+)</name>
        <dbReference type="ChEBI" id="CHEBI:18420"/>
        <label>2</label>
    </ligand>
</feature>
<feature type="sequence variant" description="In strain: SF300.">
    <original>A</original>
    <variation>C</variation>
    <location>
        <position position="106"/>
    </location>
</feature>
<feature type="sequence variant" description="In strain: SF300.">
    <original>E</original>
    <variation>D</variation>
    <location>
        <position position="153"/>
    </location>
</feature>
<feature type="sequence variant" description="In strain: SF300.">
    <original>RT</original>
    <variation>GA</variation>
    <location>
        <begin position="161"/>
        <end position="162"/>
    </location>
</feature>
<feature type="sequence variant" description="In strain: SF300.">
    <original>S</original>
    <variation>G</variation>
    <location>
        <position position="185"/>
    </location>
</feature>
<feature type="sequence variant" description="In strain: SF300.">
    <original>I</original>
    <variation>T</variation>
    <location>
        <position position="258"/>
    </location>
</feature>